<protein>
    <recommendedName>
        <fullName evidence="1">Formate--tetrahydrofolate ligase</fullName>
        <ecNumber evidence="1">6.3.4.3</ecNumber>
    </recommendedName>
    <alternativeName>
        <fullName evidence="1">Formyltetrahydrofolate synthetase</fullName>
        <shortName evidence="1">FHS</shortName>
        <shortName evidence="1">FTHFS</shortName>
    </alternativeName>
</protein>
<organism>
    <name type="scientific">Fervidobacterium nodosum (strain ATCC 35602 / DSM 5306 / Rt17-B1)</name>
    <dbReference type="NCBI Taxonomy" id="381764"/>
    <lineage>
        <taxon>Bacteria</taxon>
        <taxon>Thermotogati</taxon>
        <taxon>Thermotogota</taxon>
        <taxon>Thermotogae</taxon>
        <taxon>Thermotogales</taxon>
        <taxon>Fervidobacteriaceae</taxon>
        <taxon>Fervidobacterium</taxon>
    </lineage>
</organism>
<keyword id="KW-0067">ATP-binding</keyword>
<keyword id="KW-0436">Ligase</keyword>
<keyword id="KW-0547">Nucleotide-binding</keyword>
<keyword id="KW-0554">One-carbon metabolism</keyword>
<keyword id="KW-1185">Reference proteome</keyword>
<comment type="catalytic activity">
    <reaction evidence="1">
        <text>(6S)-5,6,7,8-tetrahydrofolate + formate + ATP = (6R)-10-formyltetrahydrofolate + ADP + phosphate</text>
        <dbReference type="Rhea" id="RHEA:20221"/>
        <dbReference type="ChEBI" id="CHEBI:15740"/>
        <dbReference type="ChEBI" id="CHEBI:30616"/>
        <dbReference type="ChEBI" id="CHEBI:43474"/>
        <dbReference type="ChEBI" id="CHEBI:57453"/>
        <dbReference type="ChEBI" id="CHEBI:195366"/>
        <dbReference type="ChEBI" id="CHEBI:456216"/>
        <dbReference type="EC" id="6.3.4.3"/>
    </reaction>
</comment>
<comment type="pathway">
    <text evidence="1">One-carbon metabolism; tetrahydrofolate interconversion.</text>
</comment>
<comment type="similarity">
    <text evidence="1">Belongs to the formate--tetrahydrofolate ligase family.</text>
</comment>
<reference key="1">
    <citation type="submission" date="2007-07" db="EMBL/GenBank/DDBJ databases">
        <title>Complete sequence of Fervidobacterium nodosum Rt17-B1.</title>
        <authorList>
            <consortium name="US DOE Joint Genome Institute"/>
            <person name="Copeland A."/>
            <person name="Lucas S."/>
            <person name="Lapidus A."/>
            <person name="Barry K."/>
            <person name="Glavina del Rio T."/>
            <person name="Dalin E."/>
            <person name="Tice H."/>
            <person name="Pitluck S."/>
            <person name="Saunders E."/>
            <person name="Brettin T."/>
            <person name="Bruce D."/>
            <person name="Detter J.C."/>
            <person name="Han C."/>
            <person name="Schmutz J."/>
            <person name="Larimer F."/>
            <person name="Land M."/>
            <person name="Hauser L."/>
            <person name="Kyrpides N."/>
            <person name="Mikhailova N."/>
            <person name="Nelson K."/>
            <person name="Gogarten J.P."/>
            <person name="Noll K."/>
            <person name="Richardson P."/>
        </authorList>
    </citation>
    <scope>NUCLEOTIDE SEQUENCE [LARGE SCALE GENOMIC DNA]</scope>
    <source>
        <strain>ATCC 35602 / DSM 5306 / Rt17-B1</strain>
    </source>
</reference>
<dbReference type="EC" id="6.3.4.3" evidence="1"/>
<dbReference type="EMBL" id="CP000771">
    <property type="protein sequence ID" value="ABS60927.1"/>
    <property type="molecule type" value="Genomic_DNA"/>
</dbReference>
<dbReference type="RefSeq" id="WP_011994240.1">
    <property type="nucleotide sequence ID" value="NC_009718.1"/>
</dbReference>
<dbReference type="SMR" id="A7HLZ4"/>
<dbReference type="STRING" id="381764.Fnod_1079"/>
<dbReference type="KEGG" id="fno:Fnod_1079"/>
<dbReference type="eggNOG" id="COG2759">
    <property type="taxonomic scope" value="Bacteria"/>
</dbReference>
<dbReference type="HOGENOM" id="CLU_003601_3_3_0"/>
<dbReference type="OrthoDB" id="9761733at2"/>
<dbReference type="UniPathway" id="UPA00193"/>
<dbReference type="Proteomes" id="UP000002415">
    <property type="component" value="Chromosome"/>
</dbReference>
<dbReference type="GO" id="GO:0005524">
    <property type="term" value="F:ATP binding"/>
    <property type="evidence" value="ECO:0007669"/>
    <property type="project" value="UniProtKB-UniRule"/>
</dbReference>
<dbReference type="GO" id="GO:0004329">
    <property type="term" value="F:formate-tetrahydrofolate ligase activity"/>
    <property type="evidence" value="ECO:0007669"/>
    <property type="project" value="UniProtKB-UniRule"/>
</dbReference>
<dbReference type="GO" id="GO:0035999">
    <property type="term" value="P:tetrahydrofolate interconversion"/>
    <property type="evidence" value="ECO:0007669"/>
    <property type="project" value="UniProtKB-UniRule"/>
</dbReference>
<dbReference type="CDD" id="cd00477">
    <property type="entry name" value="FTHFS"/>
    <property type="match status" value="1"/>
</dbReference>
<dbReference type="FunFam" id="3.30.1510.10:FF:000001">
    <property type="entry name" value="Formate--tetrahydrofolate ligase"/>
    <property type="match status" value="1"/>
</dbReference>
<dbReference type="FunFam" id="3.10.410.10:FF:000001">
    <property type="entry name" value="Putative formate--tetrahydrofolate ligase"/>
    <property type="match status" value="1"/>
</dbReference>
<dbReference type="Gene3D" id="3.30.1510.10">
    <property type="entry name" value="Domain 2, N(10)-formyltetrahydrofolate synthetase"/>
    <property type="match status" value="1"/>
</dbReference>
<dbReference type="Gene3D" id="3.10.410.10">
    <property type="entry name" value="Formyltetrahydrofolate synthetase, domain 3"/>
    <property type="match status" value="1"/>
</dbReference>
<dbReference type="Gene3D" id="3.40.50.300">
    <property type="entry name" value="P-loop containing nucleotide triphosphate hydrolases"/>
    <property type="match status" value="1"/>
</dbReference>
<dbReference type="HAMAP" id="MF_01543">
    <property type="entry name" value="FTHFS"/>
    <property type="match status" value="1"/>
</dbReference>
<dbReference type="InterPro" id="IPR000559">
    <property type="entry name" value="Formate_THF_ligase"/>
</dbReference>
<dbReference type="InterPro" id="IPR020628">
    <property type="entry name" value="Formate_THF_ligase_CS"/>
</dbReference>
<dbReference type="InterPro" id="IPR027417">
    <property type="entry name" value="P-loop_NTPase"/>
</dbReference>
<dbReference type="NCBIfam" id="NF010030">
    <property type="entry name" value="PRK13505.1"/>
    <property type="match status" value="1"/>
</dbReference>
<dbReference type="Pfam" id="PF01268">
    <property type="entry name" value="FTHFS"/>
    <property type="match status" value="1"/>
</dbReference>
<dbReference type="SUPFAM" id="SSF52540">
    <property type="entry name" value="P-loop containing nucleoside triphosphate hydrolases"/>
    <property type="match status" value="1"/>
</dbReference>
<dbReference type="PROSITE" id="PS00721">
    <property type="entry name" value="FTHFS_1"/>
    <property type="match status" value="1"/>
</dbReference>
<dbReference type="PROSITE" id="PS00722">
    <property type="entry name" value="FTHFS_2"/>
    <property type="match status" value="1"/>
</dbReference>
<name>FTHS_FERNB</name>
<proteinExistence type="inferred from homology"/>
<evidence type="ECO:0000255" key="1">
    <source>
        <dbReference type="HAMAP-Rule" id="MF_01543"/>
    </source>
</evidence>
<accession>A7HLZ4</accession>
<gene>
    <name evidence="1" type="primary">fhs</name>
    <name type="ordered locus">Fnod_1079</name>
</gene>
<sequence length="552" mass="59243">MLSDIEIAKQARLKDIRDIAKFLDIPEDMLKPYGRYIAKVDHRYLNTLNAKPNGKLILVTAITPTPAGEGKTTTSIGLSMALNRIGKKSIVTLREPSLGPVFGVKGGAAGGGYSQVLPMEDINLHFTGDIHAVTTAHNLIAAMIDAHINHGNELGIDLRKIYWKRAMDMNDRALREIVIALGGSANGYPREDGFLITAASEIMAVLCLAKDLTDLKRRIGEIVIAQGKNGLVRVKDIQAEGAAAALLKDAINPNLVQTIENTPAFVHGGPFANIAHGTNTLIATKLALKLSDYVVTEAGFAADLGAQKFLDFVAPTGGLFVDAVVIVASIRAMKYHGGVSKDNLNEENVDAVIKGLENLKVHIENMKKYGVPVVVALNRFSTDTEKEIEAVLKNSPAKCVLNEAYAKGSEGAIELAKAVVETIENVPSNYKPLVPSDLPVEQKIELIAKEIYRAGKVIYTDTAKSKLSMLKKNGFGNYPVIIAKTQNSISDDPKKINAPSGYEFTVRDFQISAGAGFVVALAGEIMLMPGLPKAPAAVNIDIDENGEITGLF</sequence>
<feature type="chain" id="PRO_1000073555" description="Formate--tetrahydrofolate ligase">
    <location>
        <begin position="1"/>
        <end position="552"/>
    </location>
</feature>
<feature type="binding site" evidence="1">
    <location>
        <begin position="65"/>
        <end position="72"/>
    </location>
    <ligand>
        <name>ATP</name>
        <dbReference type="ChEBI" id="CHEBI:30616"/>
    </ligand>
</feature>